<organismHost>
    <name type="scientific">Cavia cutleri</name>
    <name type="common">Guinea pig</name>
    <dbReference type="NCBI Taxonomy" id="10144"/>
</organismHost>
<organismHost>
    <name type="scientific">Cricetidae sp.</name>
    <name type="common">Hamster</name>
    <dbReference type="NCBI Taxonomy" id="36483"/>
</organismHost>
<organismHost>
    <name type="scientific">Mus musculus</name>
    <name type="common">Mouse</name>
    <dbReference type="NCBI Taxonomy" id="10090"/>
</organismHost>
<organismHost>
    <name type="scientific">Rattus norvegicus</name>
    <name type="common">Rat</name>
    <dbReference type="NCBI Taxonomy" id="10116"/>
</organismHost>
<gene>
    <name type="primary">F</name>
</gene>
<dbReference type="EMBL" id="X02131">
    <property type="protein sequence ID" value="CAA26043.1"/>
    <property type="molecule type" value="Genomic_RNA"/>
</dbReference>
<dbReference type="SMR" id="P04856"/>
<dbReference type="GlyCosmos" id="P04856">
    <property type="glycosylation" value="3 sites, No reported glycans"/>
</dbReference>
<dbReference type="GO" id="GO:0020002">
    <property type="term" value="C:host cell plasma membrane"/>
    <property type="evidence" value="ECO:0007669"/>
    <property type="project" value="UniProtKB-SubCell"/>
</dbReference>
<dbReference type="GO" id="GO:0016020">
    <property type="term" value="C:membrane"/>
    <property type="evidence" value="ECO:0007669"/>
    <property type="project" value="UniProtKB-KW"/>
</dbReference>
<dbReference type="GO" id="GO:0019031">
    <property type="term" value="C:viral envelope"/>
    <property type="evidence" value="ECO:0007669"/>
    <property type="project" value="UniProtKB-KW"/>
</dbReference>
<dbReference type="GO" id="GO:0055036">
    <property type="term" value="C:virion membrane"/>
    <property type="evidence" value="ECO:0007669"/>
    <property type="project" value="UniProtKB-SubCell"/>
</dbReference>
<dbReference type="GO" id="GO:0019064">
    <property type="term" value="P:fusion of virus membrane with host plasma membrane"/>
    <property type="evidence" value="ECO:0007669"/>
    <property type="project" value="UniProtKB-KW"/>
</dbReference>
<dbReference type="GO" id="GO:0046718">
    <property type="term" value="P:symbiont entry into host cell"/>
    <property type="evidence" value="ECO:0007669"/>
    <property type="project" value="UniProtKB-KW"/>
</dbReference>
<dbReference type="Gene3D" id="1.10.287.2480">
    <property type="match status" value="2"/>
</dbReference>
<dbReference type="Gene3D" id="2.60.40.1690">
    <property type="entry name" value="Head and neck region of the ectodomain of NDV fusion glycoprotein"/>
    <property type="match status" value="1"/>
</dbReference>
<dbReference type="Gene3D" id="2.40.490.10">
    <property type="entry name" value="Newcastle disease virus like domain"/>
    <property type="match status" value="1"/>
</dbReference>
<dbReference type="InterPro" id="IPR000776">
    <property type="entry name" value="Fusion_F0_Paramyxovir"/>
</dbReference>
<dbReference type="Pfam" id="PF00523">
    <property type="entry name" value="Fusion_gly"/>
    <property type="match status" value="1"/>
</dbReference>
<dbReference type="SUPFAM" id="SSF69922">
    <property type="entry name" value="Head and neck region of the ectodomain of NDV fusion glycoprotein"/>
    <property type="match status" value="1"/>
</dbReference>
<dbReference type="SUPFAM" id="SSF58069">
    <property type="entry name" value="Virus ectodomain"/>
    <property type="match status" value="1"/>
</dbReference>
<protein>
    <recommendedName>
        <fullName>Fusion glycoprotein F0</fullName>
        <shortName>Protein F</shortName>
    </recommendedName>
    <component>
        <recommendedName>
            <fullName>Fusion glycoprotein F2</fullName>
        </recommendedName>
    </component>
    <component>
        <recommendedName>
            <fullName>Fusion glycoprotein F1</fullName>
        </recommendedName>
    </component>
</protein>
<comment type="function">
    <text evidence="1">Class I viral fusion protein. Under the current model, the protein has at least 3 conformational states: pre-fusion native state, pre-hairpin intermediate state, and post-fusion hairpin state. During viral and plasma cell membrane fusion, the heptad repeat (HR) regions assume a trimer-of-hairpins structure, positioning the fusion peptide in close proximity to the C-terminal region of the ectodomain. The formation of this structure appears to drive apposition and subsequent fusion of viral and plasma cell membranes. Directs fusion of viral and cellular membranes leading to delivery of the nucleocapsid into the cytoplasm. This fusion is pH independent and occurs directly at the outer cell membrane. The trimer of F1-F2 (F protein) interacts with HN tetramer at the virion surface. Upon HN binding to its cellular receptor, the hydrophobic fusion peptide is unmasked and interacts with the cellular membrane, inducing the fusion between cell and virion membranes. Later in infection, F proteins expressed at the plasma membrane of infected cells could mediate fusion with adjacent cells to form syncytia, a cytopathic effect that could lead to tissue necrosis (By similarity).</text>
</comment>
<comment type="subunit">
    <text evidence="1">Homotrimer of disulfide-linked F1-F2. Interacts with HN and M proteins (By similarity).</text>
</comment>
<comment type="subcellular location">
    <subcellularLocation>
        <location evidence="1">Virion membrane</location>
        <topology evidence="1">Single-pass type I membrane protein</topology>
    </subcellularLocation>
    <subcellularLocation>
        <location evidence="1">Host cell membrane</location>
        <topology evidence="1">Single-pass membrane protein</topology>
    </subcellularLocation>
</comment>
<comment type="domain">
    <text evidence="1">The cytoplasmic region mediates the interaction with HN and M proteins.</text>
</comment>
<comment type="PTM">
    <text evidence="1">In natural infection, inactive F0 is matured into F1 and F2 outside the cell by one or more trypsin-like, arginine-specific endoprotease secreted by the bronchial epithelial cells. One identified protease that may be involved in this process is tryptase Clara. Unlike most paramyxoviruses, Sendai F0 processing occurs on the cell surface and induces a conformational change in the protein that unmasks the fusion peptide. F0 maturation is a primary determinant for organ tropism and pathogenicity. F1 and F2 display interchain and intrachain disulfide bonds, that are necessary for correct folding and intracellular transport (By similarity).</text>
</comment>
<comment type="PTM">
    <text evidence="1">N-glycosylated; glycans consist of a mixture of high mannose-type oligosaccharides and of complex-type oligosaccharides. Glycosylation at Asn-245 is essential for membrane localization and F0 cleavage (By similarity).</text>
</comment>
<comment type="miscellaneous">
    <text>Sendai virus or recombinant F protein are widely used in cellular biology to fuse cells.</text>
</comment>
<comment type="similarity">
    <text evidence="3">Belongs to the paramyxoviruses fusion glycoprotein family.</text>
</comment>
<proteinExistence type="inferred from homology"/>
<accession>P04856</accession>
<name>FUS_SENDH</name>
<feature type="signal peptide" evidence="1">
    <location>
        <begin position="1"/>
        <end position="25"/>
    </location>
</feature>
<feature type="chain" id="PRO_0000039369" description="Fusion glycoprotein F0" evidence="1">
    <location>
        <begin position="26"/>
        <end position="565"/>
    </location>
</feature>
<feature type="chain" id="PRO_0000039370" description="Fusion glycoprotein F2" evidence="1">
    <location>
        <begin position="26"/>
        <end position="116"/>
    </location>
</feature>
<feature type="chain" id="PRO_0000039371" description="Fusion glycoprotein F1" evidence="1">
    <location>
        <begin position="117"/>
        <end position="565"/>
    </location>
</feature>
<feature type="topological domain" description="Extracellular" evidence="1">
    <location>
        <begin position="26"/>
        <end position="500"/>
    </location>
</feature>
<feature type="transmembrane region" description="Helical" evidence="1">
    <location>
        <begin position="501"/>
        <end position="521"/>
    </location>
</feature>
<feature type="topological domain" description="Cytoplasmic" evidence="1">
    <location>
        <begin position="522"/>
        <end position="565"/>
    </location>
</feature>
<feature type="region of interest" description="Fusion peptide" evidence="1">
    <location>
        <begin position="117"/>
        <end position="141"/>
    </location>
</feature>
<feature type="region of interest" description="Leucine-zipper" evidence="2">
    <location>
        <begin position="278"/>
        <end position="306"/>
    </location>
</feature>
<feature type="coiled-coil region" evidence="2">
    <location>
        <begin position="142"/>
        <end position="170"/>
    </location>
</feature>
<feature type="coiled-coil region" evidence="2">
    <location>
        <begin position="466"/>
        <end position="491"/>
    </location>
</feature>
<feature type="site" description="Cleavage; by arginine-specific endoprotease" evidence="1">
    <location>
        <begin position="116"/>
        <end position="117"/>
    </location>
</feature>
<feature type="glycosylation site" description="N-linked (GlcNAc...) asparagine; by host" evidence="1">
    <location>
        <position position="104"/>
    </location>
</feature>
<feature type="glycosylation site" description="N-linked (GlcNAc...) asparagine; by host" evidence="1">
    <location>
        <position position="245"/>
    </location>
</feature>
<feature type="glycosylation site" description="N-linked (GlcNAc...) asparagine; by host" evidence="1">
    <location>
        <position position="449"/>
    </location>
</feature>
<feature type="disulfide bond" description="Interchain (between F2 and F1 chains)" evidence="1">
    <location>
        <begin position="70"/>
        <end position="199"/>
    </location>
</feature>
<feature type="disulfide bond" evidence="1">
    <location>
        <begin position="338"/>
        <end position="347"/>
    </location>
</feature>
<feature type="disulfide bond" evidence="1">
    <location>
        <begin position="362"/>
        <end position="370"/>
    </location>
</feature>
<feature type="disulfide bond" evidence="1">
    <location>
        <begin position="401"/>
        <end position="424"/>
    </location>
</feature>
<sequence length="565" mass="61666">MTAYIQRSQCISTSLLVVLTTLVSCQIPRDRLSNIGVIVDEGKSLKIAGSHESRYIVLSLVPGVDLENGCGTAQVIQYKSLLNRLLIPLRDALDLQEALITVTNDTTQNAGVPQSRFFGAVIGTIALGVATSAQITAGIALAEAREAKRDIALIKESMTKTHKSVELLQNAVGEQILALKTLQDFVNDEIKPAISELGCETAALRLGIKLTQHYFGLLTAFGSNFGTIGEKSRTLQALSSLYSANITEIMTTIRTGQSNIYDVIYTEQIKGTVIDVDLERYMVTLSVKIPILSEVPGVLIHKASSISYNIDGEEWYVTVPSHILSRASFLGGADITDCVESRLTYICPRDPAQLIPDSQQKCILGDTTRCPVTKVVDSLIPKFAFVNGGVVANRIASTCTCGTGRRPISQDRSKGVAFLTHDNCGLIGVNGVELYANRRGHDATWGVQNLTVGPAIAIRPVDISLNLADATNFLQDSKAELEKARKILSEVGRWYNSRETVITIIVVMVVILVVIIVIVIVLYRLKRSMLMGNPDERIPRDTYTLEPKIRHMYTNGGFDAMAEKR</sequence>
<evidence type="ECO:0000250" key="1"/>
<evidence type="ECO:0000255" key="2"/>
<evidence type="ECO:0000305" key="3"/>
<organism>
    <name type="scientific">Sendai virus (strain Harris)</name>
    <name type="common">SeV</name>
    <dbReference type="NCBI Taxonomy" id="11196"/>
    <lineage>
        <taxon>Viruses</taxon>
        <taxon>Riboviria</taxon>
        <taxon>Orthornavirae</taxon>
        <taxon>Negarnaviricota</taxon>
        <taxon>Haploviricotina</taxon>
        <taxon>Monjiviricetes</taxon>
        <taxon>Mononegavirales</taxon>
        <taxon>Paramyxoviridae</taxon>
        <taxon>Feraresvirinae</taxon>
        <taxon>Respirovirus</taxon>
        <taxon>Respirovirus muris</taxon>
    </lineage>
</organism>
<keyword id="KW-0175">Coiled coil</keyword>
<keyword id="KW-1015">Disulfide bond</keyword>
<keyword id="KW-1169">Fusion of virus membrane with host cell membrane</keyword>
<keyword id="KW-1168">Fusion of virus membrane with host membrane</keyword>
<keyword id="KW-0325">Glycoprotein</keyword>
<keyword id="KW-1032">Host cell membrane</keyword>
<keyword id="KW-1043">Host membrane</keyword>
<keyword id="KW-0472">Membrane</keyword>
<keyword id="KW-0732">Signal</keyword>
<keyword id="KW-0812">Transmembrane</keyword>
<keyword id="KW-1133">Transmembrane helix</keyword>
<keyword id="KW-0261">Viral envelope protein</keyword>
<keyword id="KW-1162">Viral penetration into host cytoplasm</keyword>
<keyword id="KW-0946">Virion</keyword>
<keyword id="KW-1160">Virus entry into host cell</keyword>
<reference key="1">
    <citation type="journal article" date="1985" name="J. Gen. Virol.">
        <title>Sequence determination of the Sendai virus fusion protein gene.</title>
        <authorList>
            <person name="Blumberg B.M."/>
            <person name="Giorgi C."/>
            <person name="Rose K."/>
            <person name="Kolakofsky D."/>
        </authorList>
    </citation>
    <scope>NUCLEOTIDE SEQUENCE [GENOMIC RNA]</scope>
</reference>